<organism>
    <name type="scientific">Bifidobacterium longum (strain NCC 2705)</name>
    <dbReference type="NCBI Taxonomy" id="206672"/>
    <lineage>
        <taxon>Bacteria</taxon>
        <taxon>Bacillati</taxon>
        <taxon>Actinomycetota</taxon>
        <taxon>Actinomycetes</taxon>
        <taxon>Bifidobacteriales</taxon>
        <taxon>Bifidobacteriaceae</taxon>
        <taxon>Bifidobacterium</taxon>
    </lineage>
</organism>
<proteinExistence type="inferred from homology"/>
<reference key="1">
    <citation type="journal article" date="2002" name="Proc. Natl. Acad. Sci. U.S.A.">
        <title>The genome sequence of Bifidobacterium longum reflects its adaptation to the human gastrointestinal tract.</title>
        <authorList>
            <person name="Schell M.A."/>
            <person name="Karmirantzou M."/>
            <person name="Snel B."/>
            <person name="Vilanova D."/>
            <person name="Berger B."/>
            <person name="Pessi G."/>
            <person name="Zwahlen M.-C."/>
            <person name="Desiere F."/>
            <person name="Bork P."/>
            <person name="Delley M."/>
            <person name="Pridmore R.D."/>
            <person name="Arigoni F."/>
        </authorList>
    </citation>
    <scope>NUCLEOTIDE SEQUENCE [LARGE SCALE GENOMIC DNA]</scope>
    <source>
        <strain>NCC 2705</strain>
    </source>
</reference>
<keyword id="KW-1185">Reference proteome</keyword>
<evidence type="ECO:0000255" key="1">
    <source>
        <dbReference type="HAMAP-Rule" id="MF_00048"/>
    </source>
</evidence>
<evidence type="ECO:0000305" key="2"/>
<feature type="chain" id="PRO_0000167334" description="UPF0102 protein BL0935">
    <location>
        <begin position="1"/>
        <end position="124"/>
    </location>
</feature>
<name>Y935_BIFLO</name>
<protein>
    <recommendedName>
        <fullName evidence="1">UPF0102 protein BL0935</fullName>
    </recommendedName>
</protein>
<sequence length="124" mass="14453">MGDRNLTPKQFGALGEQYAAAWLEEHGWTTLSRNWHTRYGELDIVMLNPEYTVVFVEVKSRRSMHYGYPQEAITPAKQHNLRKAACDWLLDRRNRVPHSAVRFDVVTIVLRVGRPLVHHIENAF</sequence>
<accession>Q8G5R9</accession>
<comment type="similarity">
    <text evidence="1">Belongs to the UPF0102 family.</text>
</comment>
<comment type="sequence caution" evidence="2">
    <conflict type="erroneous initiation">
        <sequence resource="EMBL-CDS" id="AAN24747"/>
    </conflict>
</comment>
<dbReference type="EMBL" id="AE014295">
    <property type="protein sequence ID" value="AAN24747.1"/>
    <property type="status" value="ALT_INIT"/>
    <property type="molecule type" value="Genomic_DNA"/>
</dbReference>
<dbReference type="RefSeq" id="NP_696111.1">
    <property type="nucleotide sequence ID" value="NC_004307.2"/>
</dbReference>
<dbReference type="SMR" id="Q8G5R9"/>
<dbReference type="STRING" id="206672.BL0935"/>
<dbReference type="EnsemblBacteria" id="AAN24747">
    <property type="protein sequence ID" value="AAN24747"/>
    <property type="gene ID" value="BL0935"/>
</dbReference>
<dbReference type="KEGG" id="blo:BL0935"/>
<dbReference type="PATRIC" id="fig|206672.9.peg.637"/>
<dbReference type="HOGENOM" id="CLU_115353_2_0_11"/>
<dbReference type="OrthoDB" id="9794876at2"/>
<dbReference type="Proteomes" id="UP000000439">
    <property type="component" value="Chromosome"/>
</dbReference>
<dbReference type="GO" id="GO:0003676">
    <property type="term" value="F:nucleic acid binding"/>
    <property type="evidence" value="ECO:0007669"/>
    <property type="project" value="InterPro"/>
</dbReference>
<dbReference type="CDD" id="cd20736">
    <property type="entry name" value="PoNe_Nuclease"/>
    <property type="match status" value="1"/>
</dbReference>
<dbReference type="Gene3D" id="3.40.1350.10">
    <property type="match status" value="1"/>
</dbReference>
<dbReference type="HAMAP" id="MF_00048">
    <property type="entry name" value="UPF0102"/>
    <property type="match status" value="1"/>
</dbReference>
<dbReference type="InterPro" id="IPR011335">
    <property type="entry name" value="Restrct_endonuc-II-like"/>
</dbReference>
<dbReference type="InterPro" id="IPR011856">
    <property type="entry name" value="tRNA_endonuc-like_dom_sf"/>
</dbReference>
<dbReference type="InterPro" id="IPR003509">
    <property type="entry name" value="UPF0102_YraN-like"/>
</dbReference>
<dbReference type="NCBIfam" id="NF009150">
    <property type="entry name" value="PRK12497.1-3"/>
    <property type="match status" value="1"/>
</dbReference>
<dbReference type="NCBIfam" id="NF009154">
    <property type="entry name" value="PRK12497.3-3"/>
    <property type="match status" value="1"/>
</dbReference>
<dbReference type="NCBIfam" id="NF011274">
    <property type="entry name" value="PRK14681.1"/>
    <property type="match status" value="1"/>
</dbReference>
<dbReference type="NCBIfam" id="TIGR00252">
    <property type="entry name" value="YraN family protein"/>
    <property type="match status" value="1"/>
</dbReference>
<dbReference type="PANTHER" id="PTHR34039">
    <property type="entry name" value="UPF0102 PROTEIN YRAN"/>
    <property type="match status" value="1"/>
</dbReference>
<dbReference type="PANTHER" id="PTHR34039:SF1">
    <property type="entry name" value="UPF0102 PROTEIN YRAN"/>
    <property type="match status" value="1"/>
</dbReference>
<dbReference type="Pfam" id="PF02021">
    <property type="entry name" value="UPF0102"/>
    <property type="match status" value="1"/>
</dbReference>
<dbReference type="SUPFAM" id="SSF52980">
    <property type="entry name" value="Restriction endonuclease-like"/>
    <property type="match status" value="1"/>
</dbReference>
<gene>
    <name type="ordered locus">BL0935</name>
</gene>